<reference key="1">
    <citation type="journal article" date="2007" name="Genome Res.">
        <title>Genome characteristics of facultatively symbiotic Frankia sp. strains reflect host range and host plant biogeography.</title>
        <authorList>
            <person name="Normand P."/>
            <person name="Lapierre P."/>
            <person name="Tisa L.S."/>
            <person name="Gogarten J.P."/>
            <person name="Alloisio N."/>
            <person name="Bagnarol E."/>
            <person name="Bassi C.A."/>
            <person name="Berry A.M."/>
            <person name="Bickhart D.M."/>
            <person name="Choisne N."/>
            <person name="Couloux A."/>
            <person name="Cournoyer B."/>
            <person name="Cruveiller S."/>
            <person name="Daubin V."/>
            <person name="Demange N."/>
            <person name="Francino M.P."/>
            <person name="Goltsman E."/>
            <person name="Huang Y."/>
            <person name="Kopp O.R."/>
            <person name="Labarre L."/>
            <person name="Lapidus A."/>
            <person name="Lavire C."/>
            <person name="Marechal J."/>
            <person name="Martinez M."/>
            <person name="Mastronunzio J.E."/>
            <person name="Mullin B.C."/>
            <person name="Niemann J."/>
            <person name="Pujic P."/>
            <person name="Rawnsley T."/>
            <person name="Rouy Z."/>
            <person name="Schenowitz C."/>
            <person name="Sellstedt A."/>
            <person name="Tavares F."/>
            <person name="Tomkins J.P."/>
            <person name="Vallenet D."/>
            <person name="Valverde C."/>
            <person name="Wall L.G."/>
            <person name="Wang Y."/>
            <person name="Medigue C."/>
            <person name="Benson D.R."/>
        </authorList>
    </citation>
    <scope>NUCLEOTIDE SEQUENCE [LARGE SCALE GENOMIC DNA]</scope>
    <source>
        <strain>DSM 45818 / CECT 9043 / HFP020203 / CcI3</strain>
    </source>
</reference>
<protein>
    <recommendedName>
        <fullName evidence="1">DNA integrity scanning protein DisA</fullName>
    </recommendedName>
    <alternativeName>
        <fullName evidence="1">Cyclic di-AMP synthase</fullName>
        <shortName evidence="1">c-di-AMP synthase</shortName>
    </alternativeName>
    <alternativeName>
        <fullName evidence="1">Diadenylate cyclase</fullName>
        <ecNumber evidence="1">2.7.7.85</ecNumber>
    </alternativeName>
</protein>
<organism>
    <name type="scientific">Frankia casuarinae (strain DSM 45818 / CECT 9043 / HFP020203 / CcI3)</name>
    <dbReference type="NCBI Taxonomy" id="106370"/>
    <lineage>
        <taxon>Bacteria</taxon>
        <taxon>Bacillati</taxon>
        <taxon>Actinomycetota</taxon>
        <taxon>Actinomycetes</taxon>
        <taxon>Frankiales</taxon>
        <taxon>Frankiaceae</taxon>
        <taxon>Frankia</taxon>
    </lineage>
</organism>
<gene>
    <name evidence="1" type="primary">disA</name>
    <name type="ordered locus">Francci3_4259</name>
</gene>
<proteinExistence type="inferred from homology"/>
<sequence>MAGPPGDDIFRATLAAVAPGTPFRDGLERILRGHTGALIVLGHDKVVEGLCTGGFELDVEFSATRLRELAKMDGAIVLSSDLQRIVRAAVHLVPDPTVPTEESGTRHRTAERVAKQAEFPVISVSQSMHIIALYVAGRRYVLDGSAAILSRANQALATLERYKLRLDEVAGTLSALEIEDLVTVRDAISVSQRLEMVRRIADEIEGYVVELGTDGRLLSLQLEELMAGVETERELTVRDYLPIGSKAGTPAQVLGELSAMSPTDLLDLTVLARVIGFSGGADILDRQISPRGYRMLAKVPRLPRMVVDRLVDHFGTLQKLLAAGVDDLQAVDGVGETRARAVREGLSRLAESSILERYV</sequence>
<evidence type="ECO:0000255" key="1">
    <source>
        <dbReference type="HAMAP-Rule" id="MF_01438"/>
    </source>
</evidence>
<evidence type="ECO:0000255" key="2">
    <source>
        <dbReference type="PROSITE-ProRule" id="PRU01130"/>
    </source>
</evidence>
<keyword id="KW-0067">ATP-binding</keyword>
<keyword id="KW-0227">DNA damage</keyword>
<keyword id="KW-0234">DNA repair</keyword>
<keyword id="KW-0238">DNA-binding</keyword>
<keyword id="KW-0460">Magnesium</keyword>
<keyword id="KW-0547">Nucleotide-binding</keyword>
<keyword id="KW-0548">Nucleotidyltransferase</keyword>
<keyword id="KW-1185">Reference proteome</keyword>
<keyword id="KW-0808">Transferase</keyword>
<feature type="chain" id="PRO_0000255645" description="DNA integrity scanning protein DisA">
    <location>
        <begin position="1"/>
        <end position="359"/>
    </location>
</feature>
<feature type="domain" description="DAC" evidence="2">
    <location>
        <begin position="7"/>
        <end position="146"/>
    </location>
</feature>
<feature type="binding site" evidence="1">
    <location>
        <position position="74"/>
    </location>
    <ligand>
        <name>ATP</name>
        <dbReference type="ChEBI" id="CHEBI:30616"/>
    </ligand>
</feature>
<feature type="binding site" evidence="1">
    <location>
        <position position="92"/>
    </location>
    <ligand>
        <name>ATP</name>
        <dbReference type="ChEBI" id="CHEBI:30616"/>
    </ligand>
</feature>
<feature type="binding site" evidence="1">
    <location>
        <begin position="105"/>
        <end position="109"/>
    </location>
    <ligand>
        <name>ATP</name>
        <dbReference type="ChEBI" id="CHEBI:30616"/>
    </ligand>
</feature>
<name>DISA_FRACC</name>
<comment type="function">
    <text evidence="1">Participates in a DNA-damage check-point that is active prior to asymmetric division when DNA is damaged. DisA forms globular foci that rapidly scan along the chromosomes during sporulation, searching for lesions. When a lesion is present, DisA pauses at the lesion site. This triggers a cellular response that culminates in a temporary block in sporulation initiation.</text>
</comment>
<comment type="function">
    <text evidence="1">Also has diadenylate cyclase activity, catalyzing the condensation of 2 ATP molecules into cyclic di-AMP (c-di-AMP). c-di-AMP acts as a signaling molecule that couples DNA integrity with progression of sporulation. The rise in c-di-AMP level generated by DisA while scanning the chromosome, operates as a positive signal that advances sporulation; upon encountering a lesion, the DisA focus arrests at the damaged site and halts c-di-AMP synthesis.</text>
</comment>
<comment type="catalytic activity">
    <reaction evidence="1">
        <text>2 ATP = 3',3'-c-di-AMP + 2 diphosphate</text>
        <dbReference type="Rhea" id="RHEA:35655"/>
        <dbReference type="ChEBI" id="CHEBI:30616"/>
        <dbReference type="ChEBI" id="CHEBI:33019"/>
        <dbReference type="ChEBI" id="CHEBI:71500"/>
        <dbReference type="EC" id="2.7.7.85"/>
    </reaction>
</comment>
<comment type="cofactor">
    <cofactor evidence="1">
        <name>Mg(2+)</name>
        <dbReference type="ChEBI" id="CHEBI:18420"/>
    </cofactor>
</comment>
<comment type="subunit">
    <text evidence="1">Homooctamer.</text>
</comment>
<comment type="similarity">
    <text evidence="1">Belongs to the DisA family.</text>
</comment>
<dbReference type="EC" id="2.7.7.85" evidence="1"/>
<dbReference type="EMBL" id="CP000249">
    <property type="protein sequence ID" value="ABD13605.1"/>
    <property type="molecule type" value="Genomic_DNA"/>
</dbReference>
<dbReference type="RefSeq" id="WP_011438613.1">
    <property type="nucleotide sequence ID" value="NZ_JENI01000012.1"/>
</dbReference>
<dbReference type="SMR" id="Q2J537"/>
<dbReference type="STRING" id="106370.Francci3_4259"/>
<dbReference type="KEGG" id="fra:Francci3_4259"/>
<dbReference type="eggNOG" id="COG1623">
    <property type="taxonomic scope" value="Bacteria"/>
</dbReference>
<dbReference type="HOGENOM" id="CLU_787128_0_0_11"/>
<dbReference type="OrthoDB" id="41841at2"/>
<dbReference type="PhylomeDB" id="Q2J537"/>
<dbReference type="Proteomes" id="UP000001937">
    <property type="component" value="Chromosome"/>
</dbReference>
<dbReference type="GO" id="GO:0004016">
    <property type="term" value="F:adenylate cyclase activity"/>
    <property type="evidence" value="ECO:0007669"/>
    <property type="project" value="TreeGrafter"/>
</dbReference>
<dbReference type="GO" id="GO:0005524">
    <property type="term" value="F:ATP binding"/>
    <property type="evidence" value="ECO:0007669"/>
    <property type="project" value="UniProtKB-UniRule"/>
</dbReference>
<dbReference type="GO" id="GO:0106408">
    <property type="term" value="F:diadenylate cyclase activity"/>
    <property type="evidence" value="ECO:0007669"/>
    <property type="project" value="UniProtKB-EC"/>
</dbReference>
<dbReference type="GO" id="GO:0003677">
    <property type="term" value="F:DNA binding"/>
    <property type="evidence" value="ECO:0007669"/>
    <property type="project" value="UniProtKB-UniRule"/>
</dbReference>
<dbReference type="GO" id="GO:0006281">
    <property type="term" value="P:DNA repair"/>
    <property type="evidence" value="ECO:0007669"/>
    <property type="project" value="UniProtKB-UniRule"/>
</dbReference>
<dbReference type="FunFam" id="1.10.150.20:FF:000016">
    <property type="entry name" value="DNA integrity scanning protein DisA"/>
    <property type="match status" value="1"/>
</dbReference>
<dbReference type="FunFam" id="1.20.1260.110:FF:000002">
    <property type="entry name" value="DNA integrity scanning protein DisA"/>
    <property type="match status" value="1"/>
</dbReference>
<dbReference type="FunFam" id="3.40.1700.10:FF:000001">
    <property type="entry name" value="DNA integrity scanning protein DisA"/>
    <property type="match status" value="1"/>
</dbReference>
<dbReference type="Gene3D" id="1.10.150.20">
    <property type="entry name" value="5' to 3' exonuclease, C-terminal subdomain"/>
    <property type="match status" value="1"/>
</dbReference>
<dbReference type="Gene3D" id="1.20.1260.110">
    <property type="entry name" value="DNA integrity scanning linker region"/>
    <property type="match status" value="1"/>
</dbReference>
<dbReference type="Gene3D" id="3.40.1700.10">
    <property type="entry name" value="DNA integrity scanning protein, DisA, N-terminal domain"/>
    <property type="match status" value="1"/>
</dbReference>
<dbReference type="HAMAP" id="MF_01438">
    <property type="entry name" value="DisA"/>
    <property type="match status" value="1"/>
</dbReference>
<dbReference type="InterPro" id="IPR050338">
    <property type="entry name" value="DisA"/>
</dbReference>
<dbReference type="InterPro" id="IPR038331">
    <property type="entry name" value="DisA_sf"/>
</dbReference>
<dbReference type="InterPro" id="IPR036888">
    <property type="entry name" value="DNA_integrity_DisA_N_sf"/>
</dbReference>
<dbReference type="InterPro" id="IPR018906">
    <property type="entry name" value="DNA_integrity_scan_DisA_link"/>
</dbReference>
<dbReference type="InterPro" id="IPR003390">
    <property type="entry name" value="DNA_integrity_scan_DisA_N"/>
</dbReference>
<dbReference type="InterPro" id="IPR023763">
    <property type="entry name" value="DNA_integrity_scanning_protein"/>
</dbReference>
<dbReference type="InterPro" id="IPR010994">
    <property type="entry name" value="RuvA_2-like"/>
</dbReference>
<dbReference type="NCBIfam" id="NF010009">
    <property type="entry name" value="PRK13482.1"/>
    <property type="match status" value="1"/>
</dbReference>
<dbReference type="PANTHER" id="PTHR34185">
    <property type="entry name" value="DIADENYLATE CYCLASE"/>
    <property type="match status" value="1"/>
</dbReference>
<dbReference type="PANTHER" id="PTHR34185:SF3">
    <property type="entry name" value="DNA INTEGRITY SCANNING PROTEIN DISA"/>
    <property type="match status" value="1"/>
</dbReference>
<dbReference type="Pfam" id="PF02457">
    <property type="entry name" value="DAC"/>
    <property type="match status" value="1"/>
</dbReference>
<dbReference type="Pfam" id="PF10635">
    <property type="entry name" value="DisA-linker"/>
    <property type="match status" value="1"/>
</dbReference>
<dbReference type="SUPFAM" id="SSF47781">
    <property type="entry name" value="RuvA domain 2-like"/>
    <property type="match status" value="1"/>
</dbReference>
<dbReference type="SUPFAM" id="SSF143597">
    <property type="entry name" value="YojJ-like"/>
    <property type="match status" value="1"/>
</dbReference>
<dbReference type="PROSITE" id="PS51794">
    <property type="entry name" value="DAC"/>
    <property type="match status" value="1"/>
</dbReference>
<accession>Q2J537</accession>